<protein>
    <recommendedName>
        <fullName evidence="1">Phosphomethylpyrimidine synthase</fullName>
        <ecNumber evidence="1">4.1.99.17</ecNumber>
    </recommendedName>
    <alternativeName>
        <fullName evidence="1">Hydroxymethylpyrimidine phosphate synthase</fullName>
        <shortName evidence="1">HMP-P synthase</shortName>
        <shortName evidence="1">HMP-phosphate synthase</shortName>
        <shortName evidence="1">HMPP synthase</shortName>
    </alternativeName>
    <alternativeName>
        <fullName evidence="1">Thiamine biosynthesis protein ThiC</fullName>
    </alternativeName>
</protein>
<keyword id="KW-0004">4Fe-4S</keyword>
<keyword id="KW-0408">Iron</keyword>
<keyword id="KW-0411">Iron-sulfur</keyword>
<keyword id="KW-0456">Lyase</keyword>
<keyword id="KW-0479">Metal-binding</keyword>
<keyword id="KW-1185">Reference proteome</keyword>
<keyword id="KW-0949">S-adenosyl-L-methionine</keyword>
<keyword id="KW-0784">Thiamine biosynthesis</keyword>
<keyword id="KW-0862">Zinc</keyword>
<evidence type="ECO:0000255" key="1">
    <source>
        <dbReference type="HAMAP-Rule" id="MF_00089"/>
    </source>
</evidence>
<evidence type="ECO:0000256" key="2">
    <source>
        <dbReference type="SAM" id="MobiDB-lite"/>
    </source>
</evidence>
<reference key="1">
    <citation type="journal article" date="2007" name="Science">
        <title>Legumes symbioses: absence of nod genes in photosynthetic bradyrhizobia.</title>
        <authorList>
            <person name="Giraud E."/>
            <person name="Moulin L."/>
            <person name="Vallenet D."/>
            <person name="Barbe V."/>
            <person name="Cytryn E."/>
            <person name="Avarre J.-C."/>
            <person name="Jaubert M."/>
            <person name="Simon D."/>
            <person name="Cartieaux F."/>
            <person name="Prin Y."/>
            <person name="Bena G."/>
            <person name="Hannibal L."/>
            <person name="Fardoux J."/>
            <person name="Kojadinovic M."/>
            <person name="Vuillet L."/>
            <person name="Lajus A."/>
            <person name="Cruveiller S."/>
            <person name="Rouy Z."/>
            <person name="Mangenot S."/>
            <person name="Segurens B."/>
            <person name="Dossat C."/>
            <person name="Franck W.L."/>
            <person name="Chang W.-S."/>
            <person name="Saunders E."/>
            <person name="Bruce D."/>
            <person name="Richardson P."/>
            <person name="Normand P."/>
            <person name="Dreyfus B."/>
            <person name="Pignol D."/>
            <person name="Stacey G."/>
            <person name="Emerich D."/>
            <person name="Vermeglio A."/>
            <person name="Medigue C."/>
            <person name="Sadowsky M."/>
        </authorList>
    </citation>
    <scope>NUCLEOTIDE SEQUENCE [LARGE SCALE GENOMIC DNA]</scope>
    <source>
        <strain>ORS 278</strain>
    </source>
</reference>
<proteinExistence type="inferred from homology"/>
<name>THIC_BRASO</name>
<accession>A4YZQ6</accession>
<sequence length="633" mass="69529">MNIRSNPDTTLPAVTTGPLPSSRKIYAVPDSAPDLRVPLREIILSEAASEPNLPVYDTSGPYTDPSVTIDVNAGLPRNRIAWVLERGGVEEYVGRDIKPEDNGNVGADKAAKAFTAHHKPLRGLDGHKITQLEFARAGIVTKEMIYVAERENLGRKVQLERAEAALADGESFGASVPAFITPEFVRDEIARGRAIIPCNINHAELEPMIIGRNFLTKINANIGNSAVTSSVEEEVDKMVWAIRWGADTVMDLSTGRNIHTTREWILRNSPVPIGTVPIYQALEKCNGDPVALTWELYKDTLIEQCEQGVDYFTIHAGVRLQYIHLTASRVTGIVSRGGSIMAKWCLAHHKESFLYTHFDEICDIMRKYDVSFSLGDGLRPGSIADANDRAQFAELETLGELTKIAWDKGCQVMIEGPGHVPMHKIKINMDKQLKECGEAPFYTLGPLTTDIAPGYDHITSGIGAAMIGWFGCAMLCYVTPKEHLGLPDRNDVKTGVITYKIAAHAADLAKGHPAAQLRDDALSRARFEFRWTDQFNLGLDPDTAKSFHDETLPKEAHKVAHFCSMCGPKFCSMKITQDVRDYAATLNDPATVGMTISGTIEDGMAQMSAKFKEMGGSVYLDAEKVKESNKALS</sequence>
<gene>
    <name evidence="1" type="primary">thiC</name>
    <name type="ordered locus">BRADO5713</name>
</gene>
<dbReference type="EC" id="4.1.99.17" evidence="1"/>
<dbReference type="EMBL" id="CU234118">
    <property type="protein sequence ID" value="CAL79382.1"/>
    <property type="molecule type" value="Genomic_DNA"/>
</dbReference>
<dbReference type="RefSeq" id="WP_012029288.1">
    <property type="nucleotide sequence ID" value="NC_009445.1"/>
</dbReference>
<dbReference type="SMR" id="A4YZQ6"/>
<dbReference type="STRING" id="114615.BRADO5713"/>
<dbReference type="KEGG" id="bra:BRADO5713"/>
<dbReference type="eggNOG" id="COG0422">
    <property type="taxonomic scope" value="Bacteria"/>
</dbReference>
<dbReference type="HOGENOM" id="CLU_013181_2_1_5"/>
<dbReference type="OrthoDB" id="9805897at2"/>
<dbReference type="UniPathway" id="UPA00060"/>
<dbReference type="Proteomes" id="UP000001994">
    <property type="component" value="Chromosome"/>
</dbReference>
<dbReference type="GO" id="GO:0005829">
    <property type="term" value="C:cytosol"/>
    <property type="evidence" value="ECO:0007669"/>
    <property type="project" value="TreeGrafter"/>
</dbReference>
<dbReference type="GO" id="GO:0051539">
    <property type="term" value="F:4 iron, 4 sulfur cluster binding"/>
    <property type="evidence" value="ECO:0007669"/>
    <property type="project" value="UniProtKB-KW"/>
</dbReference>
<dbReference type="GO" id="GO:0016830">
    <property type="term" value="F:carbon-carbon lyase activity"/>
    <property type="evidence" value="ECO:0007669"/>
    <property type="project" value="InterPro"/>
</dbReference>
<dbReference type="GO" id="GO:0008270">
    <property type="term" value="F:zinc ion binding"/>
    <property type="evidence" value="ECO:0007669"/>
    <property type="project" value="UniProtKB-UniRule"/>
</dbReference>
<dbReference type="GO" id="GO:0009228">
    <property type="term" value="P:thiamine biosynthetic process"/>
    <property type="evidence" value="ECO:0007669"/>
    <property type="project" value="UniProtKB-KW"/>
</dbReference>
<dbReference type="GO" id="GO:0009229">
    <property type="term" value="P:thiamine diphosphate biosynthetic process"/>
    <property type="evidence" value="ECO:0007669"/>
    <property type="project" value="UniProtKB-UniRule"/>
</dbReference>
<dbReference type="FunFam" id="3.20.20.540:FF:000001">
    <property type="entry name" value="Phosphomethylpyrimidine synthase"/>
    <property type="match status" value="1"/>
</dbReference>
<dbReference type="Gene3D" id="6.10.250.620">
    <property type="match status" value="1"/>
</dbReference>
<dbReference type="Gene3D" id="3.20.20.540">
    <property type="entry name" value="Radical SAM ThiC family, central domain"/>
    <property type="match status" value="1"/>
</dbReference>
<dbReference type="HAMAP" id="MF_00089">
    <property type="entry name" value="ThiC"/>
    <property type="match status" value="1"/>
</dbReference>
<dbReference type="InterPro" id="IPR037509">
    <property type="entry name" value="ThiC"/>
</dbReference>
<dbReference type="InterPro" id="IPR025747">
    <property type="entry name" value="ThiC-associated_dom"/>
</dbReference>
<dbReference type="InterPro" id="IPR038521">
    <property type="entry name" value="ThiC/Bza_core_dom"/>
</dbReference>
<dbReference type="InterPro" id="IPR002817">
    <property type="entry name" value="ThiC/BzaA/B"/>
</dbReference>
<dbReference type="NCBIfam" id="NF006763">
    <property type="entry name" value="PRK09284.1"/>
    <property type="match status" value="1"/>
</dbReference>
<dbReference type="NCBIfam" id="NF009895">
    <property type="entry name" value="PRK13352.1"/>
    <property type="match status" value="1"/>
</dbReference>
<dbReference type="NCBIfam" id="TIGR00190">
    <property type="entry name" value="thiC"/>
    <property type="match status" value="1"/>
</dbReference>
<dbReference type="PANTHER" id="PTHR30557:SF1">
    <property type="entry name" value="PHOSPHOMETHYLPYRIMIDINE SYNTHASE, CHLOROPLASTIC"/>
    <property type="match status" value="1"/>
</dbReference>
<dbReference type="PANTHER" id="PTHR30557">
    <property type="entry name" value="THIAMINE BIOSYNTHESIS PROTEIN THIC"/>
    <property type="match status" value="1"/>
</dbReference>
<dbReference type="Pfam" id="PF13667">
    <property type="entry name" value="ThiC-associated"/>
    <property type="match status" value="1"/>
</dbReference>
<dbReference type="Pfam" id="PF01964">
    <property type="entry name" value="ThiC_Rad_SAM"/>
    <property type="match status" value="1"/>
</dbReference>
<dbReference type="SFLD" id="SFLDF00407">
    <property type="entry name" value="phosphomethylpyrimidine_syntha"/>
    <property type="match status" value="1"/>
</dbReference>
<dbReference type="SFLD" id="SFLDG01114">
    <property type="entry name" value="phosphomethylpyrimidine_syntha"/>
    <property type="match status" value="1"/>
</dbReference>
<dbReference type="SFLD" id="SFLDS00113">
    <property type="entry name" value="Radical_SAM_Phosphomethylpyrim"/>
    <property type="match status" value="1"/>
</dbReference>
<comment type="function">
    <text evidence="1">Catalyzes the synthesis of the hydroxymethylpyrimidine phosphate (HMP-P) moiety of thiamine from aminoimidazole ribotide (AIR) in a radical S-adenosyl-L-methionine (SAM)-dependent reaction.</text>
</comment>
<comment type="catalytic activity">
    <reaction evidence="1">
        <text>5-amino-1-(5-phospho-beta-D-ribosyl)imidazole + S-adenosyl-L-methionine = 4-amino-2-methyl-5-(phosphooxymethyl)pyrimidine + CO + 5'-deoxyadenosine + formate + L-methionine + 3 H(+)</text>
        <dbReference type="Rhea" id="RHEA:24840"/>
        <dbReference type="ChEBI" id="CHEBI:15378"/>
        <dbReference type="ChEBI" id="CHEBI:15740"/>
        <dbReference type="ChEBI" id="CHEBI:17245"/>
        <dbReference type="ChEBI" id="CHEBI:17319"/>
        <dbReference type="ChEBI" id="CHEBI:57844"/>
        <dbReference type="ChEBI" id="CHEBI:58354"/>
        <dbReference type="ChEBI" id="CHEBI:59789"/>
        <dbReference type="ChEBI" id="CHEBI:137981"/>
        <dbReference type="EC" id="4.1.99.17"/>
    </reaction>
</comment>
<comment type="cofactor">
    <cofactor evidence="1">
        <name>[4Fe-4S] cluster</name>
        <dbReference type="ChEBI" id="CHEBI:49883"/>
    </cofactor>
    <text evidence="1">Binds 1 [4Fe-4S] cluster per subunit. The cluster is coordinated with 3 cysteines and an exchangeable S-adenosyl-L-methionine.</text>
</comment>
<comment type="pathway">
    <text evidence="1">Cofactor biosynthesis; thiamine diphosphate biosynthesis.</text>
</comment>
<comment type="subunit">
    <text evidence="1">Homodimer.</text>
</comment>
<comment type="similarity">
    <text evidence="1">Belongs to the ThiC family.</text>
</comment>
<organism>
    <name type="scientific">Bradyrhizobium sp. (strain ORS 278)</name>
    <dbReference type="NCBI Taxonomy" id="114615"/>
    <lineage>
        <taxon>Bacteria</taxon>
        <taxon>Pseudomonadati</taxon>
        <taxon>Pseudomonadota</taxon>
        <taxon>Alphaproteobacteria</taxon>
        <taxon>Hyphomicrobiales</taxon>
        <taxon>Nitrobacteraceae</taxon>
        <taxon>Bradyrhizobium</taxon>
    </lineage>
</organism>
<feature type="chain" id="PRO_1000004737" description="Phosphomethylpyrimidine synthase">
    <location>
        <begin position="1"/>
        <end position="633"/>
    </location>
</feature>
<feature type="region of interest" description="Disordered" evidence="2">
    <location>
        <begin position="1"/>
        <end position="20"/>
    </location>
</feature>
<feature type="compositionally biased region" description="Polar residues" evidence="2">
    <location>
        <begin position="1"/>
        <end position="13"/>
    </location>
</feature>
<feature type="binding site" evidence="1">
    <location>
        <position position="221"/>
    </location>
    <ligand>
        <name>substrate</name>
    </ligand>
</feature>
<feature type="binding site" evidence="1">
    <location>
        <position position="250"/>
    </location>
    <ligand>
        <name>substrate</name>
    </ligand>
</feature>
<feature type="binding site" evidence="1">
    <location>
        <position position="279"/>
    </location>
    <ligand>
        <name>substrate</name>
    </ligand>
</feature>
<feature type="binding site" evidence="1">
    <location>
        <position position="315"/>
    </location>
    <ligand>
        <name>substrate</name>
    </ligand>
</feature>
<feature type="binding site" evidence="1">
    <location>
        <begin position="335"/>
        <end position="337"/>
    </location>
    <ligand>
        <name>substrate</name>
    </ligand>
</feature>
<feature type="binding site" evidence="1">
    <location>
        <begin position="376"/>
        <end position="379"/>
    </location>
    <ligand>
        <name>substrate</name>
    </ligand>
</feature>
<feature type="binding site" evidence="1">
    <location>
        <position position="415"/>
    </location>
    <ligand>
        <name>substrate</name>
    </ligand>
</feature>
<feature type="binding site" evidence="1">
    <location>
        <position position="419"/>
    </location>
    <ligand>
        <name>Zn(2+)</name>
        <dbReference type="ChEBI" id="CHEBI:29105"/>
    </ligand>
</feature>
<feature type="binding site" evidence="1">
    <location>
        <position position="442"/>
    </location>
    <ligand>
        <name>substrate</name>
    </ligand>
</feature>
<feature type="binding site" evidence="1">
    <location>
        <position position="483"/>
    </location>
    <ligand>
        <name>Zn(2+)</name>
        <dbReference type="ChEBI" id="CHEBI:29105"/>
    </ligand>
</feature>
<feature type="binding site" evidence="1">
    <location>
        <position position="563"/>
    </location>
    <ligand>
        <name>[4Fe-4S] cluster</name>
        <dbReference type="ChEBI" id="CHEBI:49883"/>
        <note>4Fe-4S-S-AdoMet</note>
    </ligand>
</feature>
<feature type="binding site" evidence="1">
    <location>
        <position position="566"/>
    </location>
    <ligand>
        <name>[4Fe-4S] cluster</name>
        <dbReference type="ChEBI" id="CHEBI:49883"/>
        <note>4Fe-4S-S-AdoMet</note>
    </ligand>
</feature>
<feature type="binding site" evidence="1">
    <location>
        <position position="571"/>
    </location>
    <ligand>
        <name>[4Fe-4S] cluster</name>
        <dbReference type="ChEBI" id="CHEBI:49883"/>
        <note>4Fe-4S-S-AdoMet</note>
    </ligand>
</feature>